<reference key="1">
    <citation type="journal article" date="2007" name="J. Bacteriol.">
        <title>The genome sequence of avian pathogenic Escherichia coli strain O1:K1:H7 shares strong similarities with human extraintestinal pathogenic E. coli genomes.</title>
        <authorList>
            <person name="Johnson T.J."/>
            <person name="Kariyawasam S."/>
            <person name="Wannemuehler Y."/>
            <person name="Mangiamele P."/>
            <person name="Johnson S.J."/>
            <person name="Doetkott C."/>
            <person name="Skyberg J.A."/>
            <person name="Lynne A.M."/>
            <person name="Johnson J.R."/>
            <person name="Nolan L.K."/>
        </authorList>
    </citation>
    <scope>NUCLEOTIDE SEQUENCE [LARGE SCALE GENOMIC DNA]</scope>
</reference>
<comment type="function">
    <text evidence="1">Transports acetate.</text>
</comment>
<comment type="subcellular location">
    <subcellularLocation>
        <location evidence="1">Cell inner membrane</location>
        <topology evidence="1">Multi-pass membrane protein</topology>
    </subcellularLocation>
</comment>
<comment type="similarity">
    <text evidence="1">Belongs to the sodium:solute symporter (SSF) (TC 2.A.21) family.</text>
</comment>
<dbReference type="EMBL" id="CP000468">
    <property type="protein sequence ID" value="ABJ03548.1"/>
    <property type="molecule type" value="Genomic_DNA"/>
</dbReference>
<dbReference type="RefSeq" id="WP_000832549.1">
    <property type="nucleotide sequence ID" value="NZ_CADILS010000008.1"/>
</dbReference>
<dbReference type="SMR" id="A1AIQ8"/>
<dbReference type="KEGG" id="ecv:APECO1_2388"/>
<dbReference type="HOGENOM" id="CLU_018808_8_3_6"/>
<dbReference type="Proteomes" id="UP000008216">
    <property type="component" value="Chromosome"/>
</dbReference>
<dbReference type="GO" id="GO:0005886">
    <property type="term" value="C:plasma membrane"/>
    <property type="evidence" value="ECO:0007669"/>
    <property type="project" value="UniProtKB-SubCell"/>
</dbReference>
<dbReference type="GO" id="GO:0015123">
    <property type="term" value="F:acetate transmembrane transporter activity"/>
    <property type="evidence" value="ECO:0007669"/>
    <property type="project" value="UniProtKB-UniRule"/>
</dbReference>
<dbReference type="GO" id="GO:0043879">
    <property type="term" value="F:glycolate transmembrane transporter activity"/>
    <property type="evidence" value="ECO:0007669"/>
    <property type="project" value="InterPro"/>
</dbReference>
<dbReference type="GO" id="GO:0015293">
    <property type="term" value="F:symporter activity"/>
    <property type="evidence" value="ECO:0007669"/>
    <property type="project" value="UniProtKB-KW"/>
</dbReference>
<dbReference type="GO" id="GO:0006847">
    <property type="term" value="P:plasma membrane acetate transport"/>
    <property type="evidence" value="ECO:0007669"/>
    <property type="project" value="TreeGrafter"/>
</dbReference>
<dbReference type="GO" id="GO:0006814">
    <property type="term" value="P:sodium ion transport"/>
    <property type="evidence" value="ECO:0007669"/>
    <property type="project" value="UniProtKB-KW"/>
</dbReference>
<dbReference type="CDD" id="cd11480">
    <property type="entry name" value="SLC5sbd_u4"/>
    <property type="match status" value="1"/>
</dbReference>
<dbReference type="FunFam" id="1.20.1730.10:FF:000001">
    <property type="entry name" value="Cation/acetate symporter ActP"/>
    <property type="match status" value="1"/>
</dbReference>
<dbReference type="Gene3D" id="1.20.1730.10">
    <property type="entry name" value="Sodium/glucose cotransporter"/>
    <property type="match status" value="1"/>
</dbReference>
<dbReference type="HAMAP" id="MF_01426">
    <property type="entry name" value="Acet_symport_ActP"/>
    <property type="match status" value="1"/>
</dbReference>
<dbReference type="InterPro" id="IPR014083">
    <property type="entry name" value="Cation/Ac_symporter_ActP"/>
</dbReference>
<dbReference type="InterPro" id="IPR038377">
    <property type="entry name" value="Na/Glc_symporter_sf"/>
</dbReference>
<dbReference type="InterPro" id="IPR001734">
    <property type="entry name" value="Na/solute_symporter"/>
</dbReference>
<dbReference type="InterPro" id="IPR018212">
    <property type="entry name" value="Na/solute_symporter_CS"/>
</dbReference>
<dbReference type="InterPro" id="IPR050277">
    <property type="entry name" value="Sodium:Solute_Symporter"/>
</dbReference>
<dbReference type="NCBIfam" id="NF006903">
    <property type="entry name" value="PRK09395.1"/>
    <property type="match status" value="1"/>
</dbReference>
<dbReference type="NCBIfam" id="NF009135">
    <property type="entry name" value="PRK12488.1"/>
    <property type="match status" value="1"/>
</dbReference>
<dbReference type="NCBIfam" id="TIGR00813">
    <property type="entry name" value="sss"/>
    <property type="match status" value="1"/>
</dbReference>
<dbReference type="NCBIfam" id="TIGR02711">
    <property type="entry name" value="symport_actP"/>
    <property type="match status" value="1"/>
</dbReference>
<dbReference type="PANTHER" id="PTHR48086:SF6">
    <property type="entry name" value="CATION_ACETATE SYMPORTER ACTP"/>
    <property type="match status" value="1"/>
</dbReference>
<dbReference type="PANTHER" id="PTHR48086">
    <property type="entry name" value="SODIUM/PROLINE SYMPORTER-RELATED"/>
    <property type="match status" value="1"/>
</dbReference>
<dbReference type="Pfam" id="PF00474">
    <property type="entry name" value="SSF"/>
    <property type="match status" value="1"/>
</dbReference>
<dbReference type="PROSITE" id="PS00456">
    <property type="entry name" value="NA_SOLUT_SYMP_1"/>
    <property type="match status" value="1"/>
</dbReference>
<dbReference type="PROSITE" id="PS00457">
    <property type="entry name" value="NA_SOLUT_SYMP_2"/>
    <property type="match status" value="1"/>
</dbReference>
<dbReference type="PROSITE" id="PS50283">
    <property type="entry name" value="NA_SOLUT_SYMP_3"/>
    <property type="match status" value="1"/>
</dbReference>
<evidence type="ECO:0000255" key="1">
    <source>
        <dbReference type="HAMAP-Rule" id="MF_01426"/>
    </source>
</evidence>
<sequence length="549" mass="59158">MKRVLTALAATLPFAANAADAISGAVERQPTNWQAIIMFLIFVVFTLGITYWASKRVRSRNDYYTAGGNITGFQNGLAIAGDYMSAASFLGISALVFTSGYDGLIYSLGFLVGWPIILFLIAERLRNLGRYTFADVASYRLKQGPIRILSACGSLVVVALYLIAQMVGAGKLIELLFGLNYHIAVVLVGVLMMMYVLFGGMLATTWVQIIKAVLLLFGASFMAFMVMKHVGFSFNNLFSEAMAVHPKGVDIMKPGGLVKDPISALSLGLGLMFGTAGLPHILMRFFTVSDAREARKSVFYATGFMGYFYILTFIIGFGAIMLVGANPEYKDAAGHLIGGNNMAAVHLANAVGGNLFLGFISAVAFATILAVVAGLTLAGASAVSHDLYANVFKKGATEREELRVSKITVLILGVIAIILGVLFENQNIAFMVGLAFAIAASCNFPIILLSMYWSKLTTRGAMLGGWLGLITAVVLMILGPTIWVQILGHEKAIFPYEYPALFSISVAFLGIWLFSATDNSAEGARERELFRAQFIRSQTGFGVEQGRAH</sequence>
<keyword id="KW-0997">Cell inner membrane</keyword>
<keyword id="KW-1003">Cell membrane</keyword>
<keyword id="KW-0406">Ion transport</keyword>
<keyword id="KW-0472">Membrane</keyword>
<keyword id="KW-1185">Reference proteome</keyword>
<keyword id="KW-0915">Sodium</keyword>
<keyword id="KW-0739">Sodium transport</keyword>
<keyword id="KW-0769">Symport</keyword>
<keyword id="KW-0812">Transmembrane</keyword>
<keyword id="KW-1133">Transmembrane helix</keyword>
<keyword id="KW-0813">Transport</keyword>
<accession>A1AIQ8</accession>
<organism>
    <name type="scientific">Escherichia coli O1:K1 / APEC</name>
    <dbReference type="NCBI Taxonomy" id="405955"/>
    <lineage>
        <taxon>Bacteria</taxon>
        <taxon>Pseudomonadati</taxon>
        <taxon>Pseudomonadota</taxon>
        <taxon>Gammaproteobacteria</taxon>
        <taxon>Enterobacterales</taxon>
        <taxon>Enterobacteriaceae</taxon>
        <taxon>Escherichia</taxon>
    </lineage>
</organism>
<feature type="chain" id="PRO_1000024336" description="Cation/acetate symporter ActP">
    <location>
        <begin position="1"/>
        <end position="549"/>
    </location>
</feature>
<feature type="transmembrane region" description="Helical" evidence="1">
    <location>
        <begin position="33"/>
        <end position="53"/>
    </location>
</feature>
<feature type="transmembrane region" description="Helical" evidence="1">
    <location>
        <begin position="77"/>
        <end position="97"/>
    </location>
</feature>
<feature type="transmembrane region" description="Helical" evidence="1">
    <location>
        <begin position="103"/>
        <end position="123"/>
    </location>
</feature>
<feature type="transmembrane region" description="Helical" evidence="1">
    <location>
        <begin position="148"/>
        <end position="168"/>
    </location>
</feature>
<feature type="transmembrane region" description="Helical" evidence="1">
    <location>
        <begin position="183"/>
        <end position="203"/>
    </location>
</feature>
<feature type="transmembrane region" description="Helical" evidence="1">
    <location>
        <begin position="206"/>
        <end position="226"/>
    </location>
</feature>
<feature type="transmembrane region" description="Helical" evidence="1">
    <location>
        <begin position="262"/>
        <end position="282"/>
    </location>
</feature>
<feature type="transmembrane region" description="Helical" evidence="1">
    <location>
        <begin position="303"/>
        <end position="323"/>
    </location>
</feature>
<feature type="transmembrane region" description="Helical" evidence="1">
    <location>
        <begin position="355"/>
        <end position="375"/>
    </location>
</feature>
<feature type="transmembrane region" description="Helical" evidence="1">
    <location>
        <begin position="404"/>
        <end position="424"/>
    </location>
</feature>
<feature type="transmembrane region" description="Helical" evidence="1">
    <location>
        <begin position="428"/>
        <end position="448"/>
    </location>
</feature>
<feature type="transmembrane region" description="Helical" evidence="1">
    <location>
        <begin position="464"/>
        <end position="484"/>
    </location>
</feature>
<feature type="transmembrane region" description="Helical" evidence="1">
    <location>
        <begin position="493"/>
        <end position="513"/>
    </location>
</feature>
<protein>
    <recommendedName>
        <fullName evidence="1">Cation/acetate symporter ActP</fullName>
    </recommendedName>
    <alternativeName>
        <fullName evidence="1">Acetate permease</fullName>
    </alternativeName>
    <alternativeName>
        <fullName evidence="1">Acetate transporter ActP</fullName>
    </alternativeName>
</protein>
<name>ACTP_ECOK1</name>
<proteinExistence type="inferred from homology"/>
<gene>
    <name evidence="1" type="primary">actP</name>
    <name type="ordered locus">Ecok1_40540</name>
    <name type="ORF">APECO1_2388</name>
</gene>